<organism>
    <name type="scientific">Buchnera aphidicola subsp. Acyrthosiphon pisum (strain Tuc7)</name>
    <dbReference type="NCBI Taxonomy" id="561501"/>
    <lineage>
        <taxon>Bacteria</taxon>
        <taxon>Pseudomonadati</taxon>
        <taxon>Pseudomonadota</taxon>
        <taxon>Gammaproteobacteria</taxon>
        <taxon>Enterobacterales</taxon>
        <taxon>Erwiniaceae</taxon>
        <taxon>Buchnera</taxon>
    </lineage>
</organism>
<reference key="1">
    <citation type="journal article" date="2009" name="Science">
        <title>The dynamics and time scale of ongoing genomic erosion in symbiotic bacteria.</title>
        <authorList>
            <person name="Moran N.A."/>
            <person name="McLaughlin H.J."/>
            <person name="Sorek R."/>
        </authorList>
    </citation>
    <scope>NUCLEOTIDE SEQUENCE [LARGE SCALE GENOMIC DNA]</scope>
    <source>
        <strain>Tuc7</strain>
    </source>
</reference>
<comment type="function">
    <text evidence="1">Reversibly transfers an adenylyl group from ATP to 4'-phosphopantetheine, yielding dephospho-CoA (dPCoA) and pyrophosphate.</text>
</comment>
<comment type="catalytic activity">
    <reaction evidence="1">
        <text>(R)-4'-phosphopantetheine + ATP + H(+) = 3'-dephospho-CoA + diphosphate</text>
        <dbReference type="Rhea" id="RHEA:19801"/>
        <dbReference type="ChEBI" id="CHEBI:15378"/>
        <dbReference type="ChEBI" id="CHEBI:30616"/>
        <dbReference type="ChEBI" id="CHEBI:33019"/>
        <dbReference type="ChEBI" id="CHEBI:57328"/>
        <dbReference type="ChEBI" id="CHEBI:61723"/>
        <dbReference type="EC" id="2.7.7.3"/>
    </reaction>
</comment>
<comment type="cofactor">
    <cofactor evidence="1">
        <name>Mg(2+)</name>
        <dbReference type="ChEBI" id="CHEBI:18420"/>
    </cofactor>
</comment>
<comment type="pathway">
    <text evidence="1">Cofactor biosynthesis; coenzyme A biosynthesis; CoA from (R)-pantothenate: step 4/5.</text>
</comment>
<comment type="subunit">
    <text evidence="1">Homohexamer.</text>
</comment>
<comment type="subcellular location">
    <subcellularLocation>
        <location evidence="1">Cytoplasm</location>
    </subcellularLocation>
</comment>
<comment type="similarity">
    <text evidence="1">Belongs to the bacterial CoaD family.</text>
</comment>
<evidence type="ECO:0000255" key="1">
    <source>
        <dbReference type="HAMAP-Rule" id="MF_00151"/>
    </source>
</evidence>
<protein>
    <recommendedName>
        <fullName evidence="1">Phosphopantetheine adenylyltransferase</fullName>
        <ecNumber evidence="1">2.7.7.3</ecNumber>
    </recommendedName>
    <alternativeName>
        <fullName evidence="1">Dephospho-CoA pyrophosphorylase</fullName>
    </alternativeName>
    <alternativeName>
        <fullName evidence="1">Pantetheine-phosphate adenylyltransferase</fullName>
        <shortName evidence="1">PPAT</shortName>
    </alternativeName>
</protein>
<feature type="chain" id="PRO_1000123270" description="Phosphopantetheine adenylyltransferase">
    <location>
        <begin position="1"/>
        <end position="165"/>
    </location>
</feature>
<feature type="binding site" evidence="1">
    <location>
        <begin position="10"/>
        <end position="11"/>
    </location>
    <ligand>
        <name>ATP</name>
        <dbReference type="ChEBI" id="CHEBI:30616"/>
    </ligand>
</feature>
<feature type="binding site" evidence="1">
    <location>
        <position position="10"/>
    </location>
    <ligand>
        <name>substrate</name>
    </ligand>
</feature>
<feature type="binding site" evidence="1">
    <location>
        <position position="18"/>
    </location>
    <ligand>
        <name>ATP</name>
        <dbReference type="ChEBI" id="CHEBI:30616"/>
    </ligand>
</feature>
<feature type="binding site" evidence="1">
    <location>
        <position position="42"/>
    </location>
    <ligand>
        <name>substrate</name>
    </ligand>
</feature>
<feature type="binding site" evidence="1">
    <location>
        <position position="75"/>
    </location>
    <ligand>
        <name>substrate</name>
    </ligand>
</feature>
<feature type="binding site" evidence="1">
    <location>
        <position position="89"/>
    </location>
    <ligand>
        <name>substrate</name>
    </ligand>
</feature>
<feature type="binding site" evidence="1">
    <location>
        <begin position="90"/>
        <end position="92"/>
    </location>
    <ligand>
        <name>ATP</name>
        <dbReference type="ChEBI" id="CHEBI:30616"/>
    </ligand>
</feature>
<feature type="binding site" evidence="1">
    <location>
        <position position="100"/>
    </location>
    <ligand>
        <name>ATP</name>
        <dbReference type="ChEBI" id="CHEBI:30616"/>
    </ligand>
</feature>
<feature type="binding site" evidence="1">
    <location>
        <begin position="125"/>
        <end position="131"/>
    </location>
    <ligand>
        <name>ATP</name>
        <dbReference type="ChEBI" id="CHEBI:30616"/>
    </ligand>
</feature>
<feature type="site" description="Transition state stabilizer" evidence="1">
    <location>
        <position position="18"/>
    </location>
</feature>
<dbReference type="EC" id="2.7.7.3" evidence="1"/>
<dbReference type="EMBL" id="CP001158">
    <property type="protein sequence ID" value="ACL30368.1"/>
    <property type="molecule type" value="Genomic_DNA"/>
</dbReference>
<dbReference type="RefSeq" id="WP_010896174.1">
    <property type="nucleotide sequence ID" value="NC_011834.1"/>
</dbReference>
<dbReference type="SMR" id="B8D8A3"/>
<dbReference type="KEGG" id="bau:BUAPTUC7_577"/>
<dbReference type="HOGENOM" id="CLU_100149_0_1_6"/>
<dbReference type="UniPathway" id="UPA00241">
    <property type="reaction ID" value="UER00355"/>
</dbReference>
<dbReference type="GO" id="GO:0005737">
    <property type="term" value="C:cytoplasm"/>
    <property type="evidence" value="ECO:0007669"/>
    <property type="project" value="UniProtKB-SubCell"/>
</dbReference>
<dbReference type="GO" id="GO:0005524">
    <property type="term" value="F:ATP binding"/>
    <property type="evidence" value="ECO:0007669"/>
    <property type="project" value="UniProtKB-KW"/>
</dbReference>
<dbReference type="GO" id="GO:0004595">
    <property type="term" value="F:pantetheine-phosphate adenylyltransferase activity"/>
    <property type="evidence" value="ECO:0007669"/>
    <property type="project" value="UniProtKB-UniRule"/>
</dbReference>
<dbReference type="GO" id="GO:0015937">
    <property type="term" value="P:coenzyme A biosynthetic process"/>
    <property type="evidence" value="ECO:0007669"/>
    <property type="project" value="UniProtKB-UniRule"/>
</dbReference>
<dbReference type="CDD" id="cd02163">
    <property type="entry name" value="PPAT"/>
    <property type="match status" value="1"/>
</dbReference>
<dbReference type="Gene3D" id="3.40.50.620">
    <property type="entry name" value="HUPs"/>
    <property type="match status" value="1"/>
</dbReference>
<dbReference type="HAMAP" id="MF_00151">
    <property type="entry name" value="PPAT_bact"/>
    <property type="match status" value="1"/>
</dbReference>
<dbReference type="InterPro" id="IPR004821">
    <property type="entry name" value="Cyt_trans-like"/>
</dbReference>
<dbReference type="InterPro" id="IPR001980">
    <property type="entry name" value="PPAT"/>
</dbReference>
<dbReference type="InterPro" id="IPR014729">
    <property type="entry name" value="Rossmann-like_a/b/a_fold"/>
</dbReference>
<dbReference type="NCBIfam" id="TIGR01510">
    <property type="entry name" value="coaD_prev_kdtB"/>
    <property type="match status" value="1"/>
</dbReference>
<dbReference type="NCBIfam" id="TIGR00125">
    <property type="entry name" value="cyt_tran_rel"/>
    <property type="match status" value="1"/>
</dbReference>
<dbReference type="PANTHER" id="PTHR21342">
    <property type="entry name" value="PHOSPHOPANTETHEINE ADENYLYLTRANSFERASE"/>
    <property type="match status" value="1"/>
</dbReference>
<dbReference type="PANTHER" id="PTHR21342:SF1">
    <property type="entry name" value="PHOSPHOPANTETHEINE ADENYLYLTRANSFERASE"/>
    <property type="match status" value="1"/>
</dbReference>
<dbReference type="Pfam" id="PF01467">
    <property type="entry name" value="CTP_transf_like"/>
    <property type="match status" value="1"/>
</dbReference>
<dbReference type="PRINTS" id="PR01020">
    <property type="entry name" value="LPSBIOSNTHSS"/>
</dbReference>
<dbReference type="SUPFAM" id="SSF52374">
    <property type="entry name" value="Nucleotidylyl transferase"/>
    <property type="match status" value="1"/>
</dbReference>
<keyword id="KW-0067">ATP-binding</keyword>
<keyword id="KW-0173">Coenzyme A biosynthesis</keyword>
<keyword id="KW-0963">Cytoplasm</keyword>
<keyword id="KW-0460">Magnesium</keyword>
<keyword id="KW-0547">Nucleotide-binding</keyword>
<keyword id="KW-0548">Nucleotidyltransferase</keyword>
<keyword id="KW-0808">Transferase</keyword>
<name>COAD_BUCAT</name>
<sequence>MNKTAIYPGTFDPITYGHLDIITRATKIFDSITIAISNNFTKKPIFNLKERIELTRKVTLHLKNVKKILGFNDLLANLAKKEKANILIRGVRTIFDFDYEIKLAAINKQIYPDLDSIFLLSSKEVSFISSSFVKEIAKYKGDIKPYLPKEAHSALLRKLNNDSIK</sequence>
<proteinExistence type="inferred from homology"/>
<gene>
    <name evidence="1" type="primary">coaD</name>
    <name type="ordered locus">BUAPTUC7_577</name>
</gene>
<accession>B8D8A3</accession>